<comment type="function">
    <text evidence="1">Prevents the cell division inhibition by proteins MinC and MinD at internal division sites while permitting inhibition at polar sites. This ensures cell division at the proper site by restricting the formation of a division septum at the midpoint of the long axis of the cell.</text>
</comment>
<comment type="similarity">
    <text evidence="1">Belongs to the MinE family.</text>
</comment>
<keyword id="KW-0131">Cell cycle</keyword>
<keyword id="KW-0132">Cell division</keyword>
<organism>
    <name type="scientific">Escherichia coli O157:H7 (strain EC4115 / EHEC)</name>
    <dbReference type="NCBI Taxonomy" id="444450"/>
    <lineage>
        <taxon>Bacteria</taxon>
        <taxon>Pseudomonadati</taxon>
        <taxon>Pseudomonadota</taxon>
        <taxon>Gammaproteobacteria</taxon>
        <taxon>Enterobacterales</taxon>
        <taxon>Enterobacteriaceae</taxon>
        <taxon>Escherichia</taxon>
    </lineage>
</organism>
<reference key="1">
    <citation type="journal article" date="2011" name="Proc. Natl. Acad. Sci. U.S.A.">
        <title>Genomic anatomy of Escherichia coli O157:H7 outbreaks.</title>
        <authorList>
            <person name="Eppinger M."/>
            <person name="Mammel M.K."/>
            <person name="Leclerc J.E."/>
            <person name="Ravel J."/>
            <person name="Cebula T.A."/>
        </authorList>
    </citation>
    <scope>NUCLEOTIDE SEQUENCE [LARGE SCALE GENOMIC DNA]</scope>
    <source>
        <strain>EC4115 / EHEC</strain>
    </source>
</reference>
<dbReference type="EMBL" id="CP001164">
    <property type="protein sequence ID" value="ACI38657.1"/>
    <property type="molecule type" value="Genomic_DNA"/>
</dbReference>
<dbReference type="RefSeq" id="WP_001185665.1">
    <property type="nucleotide sequence ID" value="NC_011353.1"/>
</dbReference>
<dbReference type="SMR" id="B5YXJ7"/>
<dbReference type="GeneID" id="93776260"/>
<dbReference type="KEGG" id="ecf:ECH74115_1659"/>
<dbReference type="HOGENOM" id="CLU_137929_2_2_6"/>
<dbReference type="GO" id="GO:0051301">
    <property type="term" value="P:cell division"/>
    <property type="evidence" value="ECO:0007669"/>
    <property type="project" value="UniProtKB-KW"/>
</dbReference>
<dbReference type="GO" id="GO:0032955">
    <property type="term" value="P:regulation of division septum assembly"/>
    <property type="evidence" value="ECO:0007669"/>
    <property type="project" value="InterPro"/>
</dbReference>
<dbReference type="FunFam" id="3.30.1070.10:FF:000001">
    <property type="entry name" value="Cell division topological specificity factor"/>
    <property type="match status" value="1"/>
</dbReference>
<dbReference type="Gene3D" id="3.30.1070.10">
    <property type="entry name" value="Cell division topological specificity factor MinE"/>
    <property type="match status" value="1"/>
</dbReference>
<dbReference type="HAMAP" id="MF_00262">
    <property type="entry name" value="MinE"/>
    <property type="match status" value="1"/>
</dbReference>
<dbReference type="InterPro" id="IPR005527">
    <property type="entry name" value="MinE"/>
</dbReference>
<dbReference type="InterPro" id="IPR036707">
    <property type="entry name" value="MinE_sf"/>
</dbReference>
<dbReference type="NCBIfam" id="TIGR01215">
    <property type="entry name" value="minE"/>
    <property type="match status" value="1"/>
</dbReference>
<dbReference type="NCBIfam" id="NF001422">
    <property type="entry name" value="PRK00296.1"/>
    <property type="match status" value="1"/>
</dbReference>
<dbReference type="Pfam" id="PF03776">
    <property type="entry name" value="MinE"/>
    <property type="match status" value="1"/>
</dbReference>
<dbReference type="SUPFAM" id="SSF55229">
    <property type="entry name" value="Cell division protein MinE topological specificity domain"/>
    <property type="match status" value="1"/>
</dbReference>
<gene>
    <name evidence="1" type="primary">minE</name>
    <name type="ordered locus">ECH74115_1659</name>
</gene>
<feature type="chain" id="PRO_1000114218" description="Cell division topological specificity factor">
    <location>
        <begin position="1"/>
        <end position="88"/>
    </location>
</feature>
<sequence>MALLDFFLSRKKNTANIAKERLQIIVAERRRSDAEPHYLPQLRKDILEVICKYVQIDPEMVTVQLEQKDGDISILELNVTLPEAEELK</sequence>
<accession>B5YXJ7</accession>
<protein>
    <recommendedName>
        <fullName evidence="1">Cell division topological specificity factor</fullName>
    </recommendedName>
</protein>
<name>MINE_ECO5E</name>
<evidence type="ECO:0000255" key="1">
    <source>
        <dbReference type="HAMAP-Rule" id="MF_00262"/>
    </source>
</evidence>
<proteinExistence type="inferred from homology"/>